<organism>
    <name type="scientific">Francisella tularensis subsp. holarctica (strain LVS)</name>
    <dbReference type="NCBI Taxonomy" id="376619"/>
    <lineage>
        <taxon>Bacteria</taxon>
        <taxon>Pseudomonadati</taxon>
        <taxon>Pseudomonadota</taxon>
        <taxon>Gammaproteobacteria</taxon>
        <taxon>Thiotrichales</taxon>
        <taxon>Francisellaceae</taxon>
        <taxon>Francisella</taxon>
    </lineage>
</organism>
<keyword id="KW-0963">Cytoplasm</keyword>
<keyword id="KW-0227">DNA damage</keyword>
<keyword id="KW-0234">DNA repair</keyword>
<keyword id="KW-0235">DNA replication</keyword>
<keyword id="KW-0238">DNA-binding</keyword>
<keyword id="KW-0239">DNA-directed DNA polymerase</keyword>
<keyword id="KW-0460">Magnesium</keyword>
<keyword id="KW-0479">Metal-binding</keyword>
<keyword id="KW-0515">Mutator protein</keyword>
<keyword id="KW-0548">Nucleotidyltransferase</keyword>
<keyword id="KW-1185">Reference proteome</keyword>
<keyword id="KW-0808">Transferase</keyword>
<proteinExistence type="inferred from homology"/>
<feature type="chain" id="PRO_1000137132" description="DNA polymerase IV">
    <location>
        <begin position="1"/>
        <end position="349"/>
    </location>
</feature>
<feature type="domain" description="UmuC" evidence="1">
    <location>
        <begin position="7"/>
        <end position="188"/>
    </location>
</feature>
<feature type="active site" evidence="1">
    <location>
        <position position="107"/>
    </location>
</feature>
<feature type="binding site" evidence="1">
    <location>
        <position position="11"/>
    </location>
    <ligand>
        <name>Mg(2+)</name>
        <dbReference type="ChEBI" id="CHEBI:18420"/>
    </ligand>
</feature>
<feature type="binding site" evidence="1">
    <location>
        <position position="106"/>
    </location>
    <ligand>
        <name>Mg(2+)</name>
        <dbReference type="ChEBI" id="CHEBI:18420"/>
    </ligand>
</feature>
<feature type="site" description="Substrate discrimination" evidence="1">
    <location>
        <position position="16"/>
    </location>
</feature>
<name>DPO4_FRATH</name>
<evidence type="ECO:0000255" key="1">
    <source>
        <dbReference type="HAMAP-Rule" id="MF_01113"/>
    </source>
</evidence>
<reference key="1">
    <citation type="submission" date="2006-03" db="EMBL/GenBank/DDBJ databases">
        <title>Complete genome sequence of Francisella tularensis LVS (Live Vaccine Strain).</title>
        <authorList>
            <person name="Chain P."/>
            <person name="Larimer F."/>
            <person name="Land M."/>
            <person name="Stilwagen S."/>
            <person name="Larsson P."/>
            <person name="Bearden S."/>
            <person name="Chu M."/>
            <person name="Oyston P."/>
            <person name="Forsman M."/>
            <person name="Andersson S."/>
            <person name="Lindler L."/>
            <person name="Titball R."/>
            <person name="Garcia E."/>
        </authorList>
    </citation>
    <scope>NUCLEOTIDE SEQUENCE [LARGE SCALE GENOMIC DNA]</scope>
    <source>
        <strain>LVS</strain>
    </source>
</reference>
<accession>Q2A3L2</accession>
<sequence>MTKLRKIIHIDMDYFFAQVEEKANPSLKDKPFAVGGTNPKRGVISTCNYIAREYGVRSAMPTAIAMQKCPNLILLNTDFAKYKAASAVIRDIFYSFTDKVEPLSLDEAYLDVTDVKEYKNSATLIAQAIKQEIFNKTGLTGSAGVAPNKLLAKIASDINKPNGLYVVTPKQVDSFVKDLPVKKLFGVGKVSQEKLKSMGVETCLDLQQLSLATLVDKFGKFGSSLYNYARGIDNREVNPVRIRKSVSVENTYLEDLKTLGACLEKLPSLYDKLTSRMTEEHYKSIIGIVVKFTDTKFNKTSLTRVAKILDKEMLKNLIIELHQKRNHPIRLIGIGVKLGEIDDKQMDLF</sequence>
<protein>
    <recommendedName>
        <fullName evidence="1">DNA polymerase IV</fullName>
        <shortName evidence="1">Pol IV</shortName>
        <ecNumber evidence="1">2.7.7.7</ecNumber>
    </recommendedName>
</protein>
<comment type="function">
    <text evidence="1">Poorly processive, error-prone DNA polymerase involved in untargeted mutagenesis. Copies undamaged DNA at stalled replication forks, which arise in vivo from mismatched or misaligned primer ends. These misaligned primers can be extended by PolIV. Exhibits no 3'-5' exonuclease (proofreading) activity. May be involved in translesional synthesis, in conjunction with the beta clamp from PolIII.</text>
</comment>
<comment type="catalytic activity">
    <reaction evidence="1">
        <text>DNA(n) + a 2'-deoxyribonucleoside 5'-triphosphate = DNA(n+1) + diphosphate</text>
        <dbReference type="Rhea" id="RHEA:22508"/>
        <dbReference type="Rhea" id="RHEA-COMP:17339"/>
        <dbReference type="Rhea" id="RHEA-COMP:17340"/>
        <dbReference type="ChEBI" id="CHEBI:33019"/>
        <dbReference type="ChEBI" id="CHEBI:61560"/>
        <dbReference type="ChEBI" id="CHEBI:173112"/>
        <dbReference type="EC" id="2.7.7.7"/>
    </reaction>
</comment>
<comment type="cofactor">
    <cofactor evidence="1">
        <name>Mg(2+)</name>
        <dbReference type="ChEBI" id="CHEBI:18420"/>
    </cofactor>
    <text evidence="1">Binds 2 magnesium ions per subunit.</text>
</comment>
<comment type="subunit">
    <text evidence="1">Monomer.</text>
</comment>
<comment type="subcellular location">
    <subcellularLocation>
        <location evidence="1">Cytoplasm</location>
    </subcellularLocation>
</comment>
<comment type="similarity">
    <text evidence="1">Belongs to the DNA polymerase type-Y family.</text>
</comment>
<dbReference type="EC" id="2.7.7.7" evidence="1"/>
<dbReference type="EMBL" id="AM233362">
    <property type="protein sequence ID" value="CAJ79420.1"/>
    <property type="molecule type" value="Genomic_DNA"/>
</dbReference>
<dbReference type="RefSeq" id="WP_003015811.1">
    <property type="nucleotide sequence ID" value="NZ_CP009694.1"/>
</dbReference>
<dbReference type="SMR" id="Q2A3L2"/>
<dbReference type="KEGG" id="ftl:FTL_0981"/>
<dbReference type="Proteomes" id="UP000001944">
    <property type="component" value="Chromosome"/>
</dbReference>
<dbReference type="GO" id="GO:0005829">
    <property type="term" value="C:cytosol"/>
    <property type="evidence" value="ECO:0007669"/>
    <property type="project" value="TreeGrafter"/>
</dbReference>
<dbReference type="GO" id="GO:0003684">
    <property type="term" value="F:damaged DNA binding"/>
    <property type="evidence" value="ECO:0007669"/>
    <property type="project" value="InterPro"/>
</dbReference>
<dbReference type="GO" id="GO:0003887">
    <property type="term" value="F:DNA-directed DNA polymerase activity"/>
    <property type="evidence" value="ECO:0007669"/>
    <property type="project" value="UniProtKB-UniRule"/>
</dbReference>
<dbReference type="GO" id="GO:0000287">
    <property type="term" value="F:magnesium ion binding"/>
    <property type="evidence" value="ECO:0007669"/>
    <property type="project" value="UniProtKB-UniRule"/>
</dbReference>
<dbReference type="GO" id="GO:0006261">
    <property type="term" value="P:DNA-templated DNA replication"/>
    <property type="evidence" value="ECO:0007669"/>
    <property type="project" value="UniProtKB-UniRule"/>
</dbReference>
<dbReference type="GO" id="GO:0042276">
    <property type="term" value="P:error-prone translesion synthesis"/>
    <property type="evidence" value="ECO:0007669"/>
    <property type="project" value="TreeGrafter"/>
</dbReference>
<dbReference type="GO" id="GO:0009432">
    <property type="term" value="P:SOS response"/>
    <property type="evidence" value="ECO:0007669"/>
    <property type="project" value="TreeGrafter"/>
</dbReference>
<dbReference type="CDD" id="cd03586">
    <property type="entry name" value="PolY_Pol_IV_kappa"/>
    <property type="match status" value="1"/>
</dbReference>
<dbReference type="FunFam" id="1.10.150.20:FF:000019">
    <property type="entry name" value="DNA polymerase IV"/>
    <property type="match status" value="1"/>
</dbReference>
<dbReference type="FunFam" id="3.40.1170.60:FF:000001">
    <property type="entry name" value="DNA polymerase IV"/>
    <property type="match status" value="1"/>
</dbReference>
<dbReference type="Gene3D" id="3.30.70.270">
    <property type="match status" value="1"/>
</dbReference>
<dbReference type="Gene3D" id="3.40.1170.60">
    <property type="match status" value="1"/>
</dbReference>
<dbReference type="Gene3D" id="1.10.150.20">
    <property type="entry name" value="5' to 3' exonuclease, C-terminal subdomain"/>
    <property type="match status" value="1"/>
</dbReference>
<dbReference type="Gene3D" id="3.30.1490.100">
    <property type="entry name" value="DNA polymerase, Y-family, little finger domain"/>
    <property type="match status" value="1"/>
</dbReference>
<dbReference type="HAMAP" id="MF_01113">
    <property type="entry name" value="DNApol_IV"/>
    <property type="match status" value="1"/>
</dbReference>
<dbReference type="InterPro" id="IPR043502">
    <property type="entry name" value="DNA/RNA_pol_sf"/>
</dbReference>
<dbReference type="InterPro" id="IPR036775">
    <property type="entry name" value="DNA_pol_Y-fam_lit_finger_sf"/>
</dbReference>
<dbReference type="InterPro" id="IPR017961">
    <property type="entry name" value="DNA_pol_Y-fam_little_finger"/>
</dbReference>
<dbReference type="InterPro" id="IPR050116">
    <property type="entry name" value="DNA_polymerase-Y"/>
</dbReference>
<dbReference type="InterPro" id="IPR022880">
    <property type="entry name" value="DNApol_IV"/>
</dbReference>
<dbReference type="InterPro" id="IPR053848">
    <property type="entry name" value="IMS_HHH_1"/>
</dbReference>
<dbReference type="InterPro" id="IPR043128">
    <property type="entry name" value="Rev_trsase/Diguanyl_cyclase"/>
</dbReference>
<dbReference type="InterPro" id="IPR001126">
    <property type="entry name" value="UmuC"/>
</dbReference>
<dbReference type="NCBIfam" id="NF002677">
    <property type="entry name" value="PRK02406.1"/>
    <property type="match status" value="1"/>
</dbReference>
<dbReference type="PANTHER" id="PTHR11076:SF33">
    <property type="entry name" value="DNA POLYMERASE KAPPA"/>
    <property type="match status" value="1"/>
</dbReference>
<dbReference type="PANTHER" id="PTHR11076">
    <property type="entry name" value="DNA REPAIR POLYMERASE UMUC / TRANSFERASE FAMILY MEMBER"/>
    <property type="match status" value="1"/>
</dbReference>
<dbReference type="Pfam" id="PF00817">
    <property type="entry name" value="IMS"/>
    <property type="match status" value="1"/>
</dbReference>
<dbReference type="Pfam" id="PF11799">
    <property type="entry name" value="IMS_C"/>
    <property type="match status" value="1"/>
</dbReference>
<dbReference type="Pfam" id="PF21999">
    <property type="entry name" value="IMS_HHH_1"/>
    <property type="match status" value="1"/>
</dbReference>
<dbReference type="SUPFAM" id="SSF56672">
    <property type="entry name" value="DNA/RNA polymerases"/>
    <property type="match status" value="1"/>
</dbReference>
<dbReference type="SUPFAM" id="SSF100879">
    <property type="entry name" value="Lesion bypass DNA polymerase (Y-family), little finger domain"/>
    <property type="match status" value="1"/>
</dbReference>
<dbReference type="PROSITE" id="PS50173">
    <property type="entry name" value="UMUC"/>
    <property type="match status" value="1"/>
</dbReference>
<gene>
    <name evidence="1" type="primary">dinB</name>
    <name type="ordered locus">FTL_0981</name>
</gene>